<organismHost>
    <name type="scientific">Aedes</name>
    <dbReference type="NCBI Taxonomy" id="7158"/>
</organismHost>
<organismHost>
    <name type="scientific">Bos taurus</name>
    <name type="common">Bovine</name>
    <dbReference type="NCBI Taxonomy" id="9913"/>
</organismHost>
<organismHost>
    <name type="scientific">Culicoides</name>
    <dbReference type="NCBI Taxonomy" id="58271"/>
</organismHost>
<organismHost>
    <name type="scientific">Equus asinus</name>
    <name type="common">Donkey</name>
    <name type="synonym">Equus africanus asinus</name>
    <dbReference type="NCBI Taxonomy" id="9793"/>
</organismHost>
<organismHost>
    <name type="scientific">Equus caballus</name>
    <name type="common">Horse</name>
    <dbReference type="NCBI Taxonomy" id="9796"/>
</organismHost>
<organismHost>
    <name type="scientific">Homo sapiens</name>
    <name type="common">Human</name>
    <dbReference type="NCBI Taxonomy" id="9606"/>
</organismHost>
<organismHost>
    <name type="scientific">Lutzomyia</name>
    <dbReference type="NCBI Taxonomy" id="252607"/>
</organismHost>
<organismHost>
    <name type="scientific">Musca domestica</name>
    <name type="common">House fly</name>
    <dbReference type="NCBI Taxonomy" id="7370"/>
</organismHost>
<organismHost>
    <name type="scientific">Simuliidae</name>
    <name type="common">black flies</name>
    <dbReference type="NCBI Taxonomy" id="7190"/>
</organismHost>
<organismHost>
    <name type="scientific">Sus scrofa</name>
    <name type="common">Pig</name>
    <dbReference type="NCBI Taxonomy" id="9823"/>
</organismHost>
<proteinExistence type="evidence at protein level"/>
<feature type="chain" id="PRO_0000287265" description="RNA-directed RNA polymerase L">
    <location>
        <begin position="1"/>
        <end position="2109"/>
    </location>
</feature>
<feature type="domain" description="RdRp catalytic" evidence="4">
    <location>
        <begin position="598"/>
        <end position="784"/>
    </location>
</feature>
<feature type="domain" description="Mononegavirus-type SAM-dependent 2'-O-MTase" evidence="5">
    <location>
        <begin position="1640"/>
        <end position="1837"/>
    </location>
</feature>
<feature type="region of interest" description="Capping domain" evidence="1">
    <location>
        <begin position="866"/>
        <end position="1334"/>
    </location>
</feature>
<feature type="region of interest" description="PRNTase domain" evidence="1">
    <location>
        <begin position="1081"/>
        <end position="1331"/>
    </location>
</feature>
<feature type="region of interest" description="priming-capping loop" evidence="1">
    <location>
        <begin position="1152"/>
        <end position="1189"/>
    </location>
</feature>
<feature type="region of interest" description="Connector domain" evidence="1">
    <location>
        <begin position="1358"/>
        <end position="1557"/>
    </location>
</feature>
<feature type="active site" description="Nucleophile; for GDP polyribonucleotidyltransferase" evidence="1">
    <location>
        <position position="1227"/>
    </location>
</feature>
<feature type="active site" description="For mRNA (nucleoside-2'-O-)-methyltransferase 2" evidence="1">
    <location>
        <position position="1651"/>
    </location>
</feature>
<feature type="active site" description="For mRNA (guanine-N(7)-)-methyltransferase and mRNA (nucleoside-2'-O-)-methyltransferase 2" evidence="1">
    <location>
        <position position="1762"/>
    </location>
</feature>
<feature type="active site" description="For mRNA (nucleoside-2'-O-)-methyltransferase 2" evidence="1">
    <location>
        <position position="1795"/>
    </location>
</feature>
<feature type="active site" description="For mRNA (nucleoside-2'-O-)-methyltransferase 2" evidence="1">
    <location>
        <position position="1833"/>
    </location>
</feature>
<feature type="binding site" evidence="2">
    <location>
        <position position="605"/>
    </location>
    <ligand>
        <name>Mg(2+)</name>
        <dbReference type="ChEBI" id="CHEBI:18420"/>
        <note>catalytic; for RNA-directed RNA polymerase activity</note>
    </ligand>
</feature>
<feature type="binding site" evidence="2">
    <location>
        <position position="714"/>
    </location>
    <ligand>
        <name>Mg(2+)</name>
        <dbReference type="ChEBI" id="CHEBI:18420"/>
        <note>catalytic; for RNA-directed RNA polymerase activity</note>
    </ligand>
</feature>
<feature type="binding site" evidence="1">
    <location>
        <position position="1081"/>
    </location>
    <ligand>
        <name>Zn(2+)</name>
        <dbReference type="ChEBI" id="CHEBI:29105"/>
        <note>structural</note>
    </ligand>
</feature>
<feature type="binding site" evidence="1">
    <location>
        <position position="1108"/>
    </location>
    <ligand>
        <name>Zn(2+)</name>
        <dbReference type="ChEBI" id="CHEBI:29105"/>
        <note>structural</note>
    </ligand>
</feature>
<feature type="binding site" evidence="1">
    <location>
        <position position="1120"/>
    </location>
    <ligand>
        <name>Zn(2+)</name>
        <dbReference type="ChEBI" id="CHEBI:29105"/>
        <label>2</label>
        <note>structural</note>
    </ligand>
</feature>
<feature type="binding site" evidence="1">
    <location>
        <position position="1123"/>
    </location>
    <ligand>
        <name>Zn(2+)</name>
        <dbReference type="ChEBI" id="CHEBI:29105"/>
        <label>2</label>
        <note>structural</note>
    </ligand>
</feature>
<feature type="binding site" evidence="1">
    <location>
        <position position="1294"/>
    </location>
    <ligand>
        <name>Zn(2+)</name>
        <dbReference type="ChEBI" id="CHEBI:29105"/>
        <label>2</label>
        <note>structural</note>
    </ligand>
</feature>
<feature type="binding site" evidence="1">
    <location>
        <position position="1296"/>
    </location>
    <ligand>
        <name>Zn(2+)</name>
        <dbReference type="ChEBI" id="CHEBI:29105"/>
        <label>2</label>
        <note>structural</note>
    </ligand>
</feature>
<feature type="binding site" evidence="1">
    <location>
        <position position="1299"/>
    </location>
    <ligand>
        <name>Zn(2+)</name>
        <dbReference type="ChEBI" id="CHEBI:29105"/>
        <note>structural</note>
    </ligand>
</feature>
<feature type="binding site" evidence="1">
    <location>
        <position position="1302"/>
    </location>
    <ligand>
        <name>Zn(2+)</name>
        <dbReference type="ChEBI" id="CHEBI:29105"/>
        <note>structural</note>
    </ligand>
</feature>
<feature type="binding site" evidence="3">
    <location>
        <begin position="1667"/>
        <end position="1676"/>
    </location>
    <ligand>
        <name>ATP</name>
        <dbReference type="ChEBI" id="CHEBI:30616"/>
    </ligand>
</feature>
<feature type="site" description="Interaction with the phosphoprotein" evidence="1">
    <location>
        <position position="704"/>
    </location>
</feature>
<feature type="site" description="Important for escaping from the 3'-terminal leader promotter followed by the formation of a stable leaderRNA elongation complex" evidence="1">
    <location>
        <position position="1183"/>
    </location>
</feature>
<feature type="site" description="Interaction with the phosphoprotein" evidence="1">
    <location>
        <position position="1419"/>
    </location>
</feature>
<feature type="site" description="Interaction with the phosphoprotein" evidence="1">
    <location>
        <position position="1427"/>
    </location>
</feature>
<feature type="site" description="Interaction with the phosphoprotein" evidence="1">
    <location>
        <position position="1496"/>
    </location>
</feature>
<feature type="site" description="Interaction with the phosphoprotein" evidence="1">
    <location>
        <position position="1911"/>
    </location>
</feature>
<feature type="site" description="Interaction with the phosphoprotein" evidence="1">
    <location>
        <position position="1981"/>
    </location>
</feature>
<feature type="site" description="Interaction with the phosphoprotein" evidence="1">
    <location>
        <position position="2022"/>
    </location>
</feature>
<feature type="site" description="Interaction with the phosphoprotein" evidence="1">
    <location>
        <position position="2097"/>
    </location>
</feature>
<feature type="site" description="Interaction with the phosphoprotein" evidence="1">
    <location>
        <position position="2098"/>
    </location>
</feature>
<feature type="mutagenesis site" description="Almost complete loss of viral transcription." evidence="6">
    <original>Y</original>
    <variation>A</variation>
    <location>
        <position position="39"/>
    </location>
</feature>
<feature type="mutagenesis site" description="Almost complete loss of viral transcription." evidence="6">
    <original>L</original>
    <variation>A</variation>
    <location>
        <position position="41"/>
    </location>
</feature>
<feature type="mutagenesis site" description="Almost complete loss of viral transcription." evidence="6">
    <original>D</original>
    <variation>A</variation>
    <location>
        <position position="236"/>
    </location>
</feature>
<feature type="mutagenesis site" description="Almost complete loss of viral transcription." evidence="6">
    <original>E</original>
    <variation>A</variation>
    <location>
        <position position="290"/>
    </location>
</feature>
<feature type="mutagenesis site" description="Almost complete loss of viral transcription." evidence="6">
    <original>R</original>
    <variation>A</variation>
    <location>
        <position position="356"/>
    </location>
</feature>
<feature type="mutagenesis site" description="Almost complete loss of viral transcription." evidence="6">
    <original>H</original>
    <variation>A</variation>
    <location>
        <position position="357"/>
    </location>
</feature>
<feature type="mutagenesis site" description="Almost complete loss of viral transcription." evidence="6">
    <original>W</original>
    <variation>A</variation>
    <location>
        <position position="358"/>
    </location>
</feature>
<feature type="helix" evidence="9">
    <location>
        <begin position="48"/>
        <end position="57"/>
    </location>
</feature>
<feature type="helix" evidence="9">
    <location>
        <begin position="64"/>
        <end position="67"/>
    </location>
</feature>
<feature type="helix" evidence="9">
    <location>
        <begin position="73"/>
        <end position="80"/>
    </location>
</feature>
<feature type="helix" evidence="9">
    <location>
        <begin position="88"/>
        <end position="90"/>
    </location>
</feature>
<feature type="helix" evidence="9">
    <location>
        <begin position="91"/>
        <end position="98"/>
    </location>
</feature>
<feature type="helix" evidence="9">
    <location>
        <begin position="107"/>
        <end position="131"/>
    </location>
</feature>
<feature type="helix" evidence="9">
    <location>
        <begin position="149"/>
        <end position="171"/>
    </location>
</feature>
<feature type="helix" evidence="9">
    <location>
        <begin position="176"/>
        <end position="185"/>
    </location>
</feature>
<feature type="strand" evidence="9">
    <location>
        <begin position="189"/>
        <end position="192"/>
    </location>
</feature>
<feature type="strand" evidence="9">
    <location>
        <begin position="198"/>
        <end position="204"/>
    </location>
</feature>
<feature type="turn" evidence="9">
    <location>
        <begin position="205"/>
        <end position="207"/>
    </location>
</feature>
<feature type="strand" evidence="9">
    <location>
        <begin position="208"/>
        <end position="213"/>
    </location>
</feature>
<feature type="strand" evidence="9">
    <location>
        <begin position="216"/>
        <end position="219"/>
    </location>
</feature>
<feature type="turn" evidence="9">
    <location>
        <begin position="220"/>
        <end position="223"/>
    </location>
</feature>
<feature type="strand" evidence="9">
    <location>
        <begin position="224"/>
        <end position="227"/>
    </location>
</feature>
<feature type="helix" evidence="9">
    <location>
        <begin position="228"/>
        <end position="249"/>
    </location>
</feature>
<feature type="helix" evidence="9">
    <location>
        <begin position="258"/>
        <end position="278"/>
    </location>
</feature>
<feature type="helix" evidence="9">
    <location>
        <begin position="279"/>
        <end position="282"/>
    </location>
</feature>
<feature type="helix" evidence="9">
    <location>
        <begin position="283"/>
        <end position="286"/>
    </location>
</feature>
<feature type="helix" evidence="9">
    <location>
        <begin position="289"/>
        <end position="304"/>
    </location>
</feature>
<feature type="helix" evidence="9">
    <location>
        <begin position="312"/>
        <end position="328"/>
    </location>
</feature>
<feature type="helix" evidence="9">
    <location>
        <begin position="331"/>
        <end position="341"/>
    </location>
</feature>
<feature type="helix" evidence="9">
    <location>
        <begin position="345"/>
        <end position="353"/>
    </location>
</feature>
<feature type="turn" evidence="9">
    <location>
        <begin position="354"/>
        <end position="358"/>
    </location>
</feature>
<feature type="turn" evidence="9">
    <location>
        <begin position="365"/>
        <end position="367"/>
    </location>
</feature>
<feature type="strand" evidence="9">
    <location>
        <begin position="368"/>
        <end position="370"/>
    </location>
</feature>
<comment type="function">
    <text evidence="1 2">Multifunctional enzyme responsible for RNA synthesis (replicase and transcriptase), cap addition, and cap methylation. Also performs the polyadenylation of subgenomic mRNAs by a stuttering mechanism at a slipery stop site present at the end of viral genes. The template is composed of the viral RNA tightly encapsidated by the nucleoprotein (N). L is packaged into virions during assembly and translocates to the 3' leader promoter to initiate transcription after entering the host cells. During transcription and replication of the genome, L does not bind the N-RNA complex directly, but is bridged by its non-catalytic cofactor P, which interacts with L and N oligomers simultaneously (By similarity). In the transcription mode, the polymerase performs the sequential transcription of all mRNAs using a termination-reinitiation mechanism responding to gene start and gene end signals. Some polymerase disengage from the template at each gene junction, resulting in a decreasing abundance of transcripts from the 3' to the 5' end of the genome (By similarity). The first gene is the most transcribed, and the last the least transcribed (By similarity). The viral phosphoprotein helps the polymerase to engage the N-RNA template and acts as a processivity factor. Polyribonucleotidyl transferase (PRNTase) adds the cap structure when the nascent RNA chain length has reached few nucleotides. Ribose 2'-O methylation of viral mRNA cap precedes and facilitates subsequent guanine-N-7 methylation, both activities being carried by the viral polymerase (By similarity). In the replication mode, the polymerase replicates the whole viral genome without recognizing the gene end transcriptional signals (By similarity). The ability of the polymerase to override the gene end signals as it is producing the antigenome is probably due to replicative RNA becoming encapsidated with nucleoprotein as it is synthesized (By similarity).</text>
</comment>
<comment type="catalytic activity">
    <reaction evidence="4">
        <text>RNA(n) + a ribonucleoside 5'-triphosphate = RNA(n+1) + diphosphate</text>
        <dbReference type="Rhea" id="RHEA:21248"/>
        <dbReference type="Rhea" id="RHEA-COMP:14527"/>
        <dbReference type="Rhea" id="RHEA-COMP:17342"/>
        <dbReference type="ChEBI" id="CHEBI:33019"/>
        <dbReference type="ChEBI" id="CHEBI:61557"/>
        <dbReference type="ChEBI" id="CHEBI:140395"/>
        <dbReference type="EC" id="2.7.7.48"/>
    </reaction>
</comment>
<comment type="catalytic activity">
    <reaction evidence="1">
        <text>GTP + H2O = GDP + phosphate + H(+)</text>
        <dbReference type="Rhea" id="RHEA:19669"/>
        <dbReference type="ChEBI" id="CHEBI:15377"/>
        <dbReference type="ChEBI" id="CHEBI:15378"/>
        <dbReference type="ChEBI" id="CHEBI:37565"/>
        <dbReference type="ChEBI" id="CHEBI:43474"/>
        <dbReference type="ChEBI" id="CHEBI:58189"/>
    </reaction>
</comment>
<comment type="catalytic activity">
    <reaction evidence="1">
        <text>a 5'-end triphospho-adenylyl-adenylyl-cytidylyl-adenosine in mRNA + GDP + H(+) = a 5'-end (5'-triphosphoguanosine)-adenylyl-adenylyl-cytidylyl-adenosine in mRNA + diphosphate</text>
        <dbReference type="Rhea" id="RHEA:65436"/>
        <dbReference type="Rhea" id="RHEA-COMP:16797"/>
        <dbReference type="Rhea" id="RHEA-COMP:16799"/>
        <dbReference type="ChEBI" id="CHEBI:15378"/>
        <dbReference type="ChEBI" id="CHEBI:33019"/>
        <dbReference type="ChEBI" id="CHEBI:58189"/>
        <dbReference type="ChEBI" id="CHEBI:156484"/>
        <dbReference type="ChEBI" id="CHEBI:156503"/>
        <dbReference type="EC" id="2.7.7.88"/>
    </reaction>
</comment>
<comment type="catalytic activity">
    <reaction evidence="1">
        <text>a 5'-end (5'-triphosphoguanosine)-adenylyl-adenylyl-cytidylyl-adenosine in mRNA + 2 S-adenosyl-L-methionine = a 5'-end (N(7)-methyl 5'-triphosphoguanosine)-(2'-O-methyladenylyl)-adenylyl-cytidylyl-adenosine in mRNA + 2 S-adenosyl-L-homocysteine + H(+)</text>
        <dbReference type="Rhea" id="RHEA:65376"/>
        <dbReference type="Rhea" id="RHEA-COMP:16797"/>
        <dbReference type="Rhea" id="RHEA-COMP:16798"/>
        <dbReference type="ChEBI" id="CHEBI:15378"/>
        <dbReference type="ChEBI" id="CHEBI:57856"/>
        <dbReference type="ChEBI" id="CHEBI:59789"/>
        <dbReference type="ChEBI" id="CHEBI:156483"/>
        <dbReference type="ChEBI" id="CHEBI:156484"/>
        <dbReference type="EC" id="2.1.1.375"/>
    </reaction>
</comment>
<comment type="catalytic activity">
    <reaction evidence="1">
        <text>a 5'-end (5'-triphosphoguanosine)-adenylyl-adenylyl-cytidylyl-adenosine in mRNA + S-adenosyl-L-methionine = a 5'-end (5'-triphosphoguanosine)-(2'-O-methyladenylyl)-adenylyl-cytidylyl-adenosine in mRNA + S-adenosyl-L-homocysteine + H(+)</text>
        <dbReference type="Rhea" id="RHEA:65380"/>
        <dbReference type="Rhea" id="RHEA-COMP:16797"/>
        <dbReference type="Rhea" id="RHEA-COMP:16801"/>
        <dbReference type="ChEBI" id="CHEBI:15378"/>
        <dbReference type="ChEBI" id="CHEBI:57856"/>
        <dbReference type="ChEBI" id="CHEBI:59789"/>
        <dbReference type="ChEBI" id="CHEBI:156482"/>
        <dbReference type="ChEBI" id="CHEBI:156484"/>
    </reaction>
</comment>
<comment type="catalytic activity">
    <reaction evidence="1">
        <text>a 5'-end (5'-triphosphoguanosine)-(2'-O-methyladenylyl)-adenylyl-cytidylyl-adenosine in mRNA + S-adenosyl-L-methionine = a 5'-end (N(7)-methyl 5'-triphosphoguanosine)-(2'-O-methyladenylyl)-adenylyl-cytidylyl-adenosine in mRNA + S-adenosyl-L-homocysteine</text>
        <dbReference type="Rhea" id="RHEA:65440"/>
        <dbReference type="Rhea" id="RHEA-COMP:16798"/>
        <dbReference type="Rhea" id="RHEA-COMP:16801"/>
        <dbReference type="ChEBI" id="CHEBI:57856"/>
        <dbReference type="ChEBI" id="CHEBI:59789"/>
        <dbReference type="ChEBI" id="CHEBI:156482"/>
        <dbReference type="ChEBI" id="CHEBI:156483"/>
    </reaction>
</comment>
<comment type="activity regulation">
    <text evidence="1">The GDP polyribonucleotidyltransferase activity is inhibited by the GDP analog DAPDP.</text>
</comment>
<comment type="subunit">
    <text evidence="1">May form homodimer. Interacts with the P protein; the association of P and L forms the polymerase complex, positions it on the template and allows to package the L polymerase in the virion, since P acts as a bridge between N and L. L binds loosely to N and is further bridged by the P protein, which interacts with L and N oligomers simultaneously.</text>
</comment>
<comment type="subcellular location">
    <subcellularLocation>
        <location evidence="1">Virion</location>
    </subcellularLocation>
    <subcellularLocation>
        <location evidence="1">Host cytoplasm</location>
    </subcellularLocation>
    <text evidence="1">L and P are packaged asymmetrically towards the blunt end of the virus. About 55 copies of L are present in the virion.</text>
</comment>
<comment type="domain">
    <text evidence="1">The RNA-dependent RNA polymerase (RdRp) domain is responsible for the RNA sythesis. The polyribonucleotidyl transferase (PRNTase) domain is responsible for the initiation of transcription at the 3'-end of the genome (priming) and pre-mRNA 5'-capping during start-stop transcription. The methyltransferase (MTase) domain is responsible for the cap methylation.</text>
</comment>
<comment type="similarity">
    <text evidence="7">Belongs to the rhabdoviridae protein L family.</text>
</comment>
<keyword id="KW-0002">3D-structure</keyword>
<keyword id="KW-0067">ATP-binding</keyword>
<keyword id="KW-1035">Host cytoplasm</keyword>
<keyword id="KW-0378">Hydrolase</keyword>
<keyword id="KW-0460">Magnesium</keyword>
<keyword id="KW-0479">Metal-binding</keyword>
<keyword id="KW-0489">Methyltransferase</keyword>
<keyword id="KW-0506">mRNA capping</keyword>
<keyword id="KW-0507">mRNA processing</keyword>
<keyword id="KW-0511">Multifunctional enzyme</keyword>
<keyword id="KW-0547">Nucleotide-binding</keyword>
<keyword id="KW-0548">Nucleotidyltransferase</keyword>
<keyword id="KW-0696">RNA-directed RNA polymerase</keyword>
<keyword id="KW-0949">S-adenosyl-L-methionine</keyword>
<keyword id="KW-0808">Transferase</keyword>
<keyword id="KW-0693">Viral RNA replication</keyword>
<keyword id="KW-0946">Virion</keyword>
<keyword id="KW-0862">Zinc</keyword>
<dbReference type="EC" id="2.7.7.48" evidence="2"/>
<dbReference type="EC" id="3.6.1.-" evidence="1"/>
<dbReference type="EC" id="2.7.7.88" evidence="6"/>
<dbReference type="EC" id="2.1.1.375" evidence="1"/>
<dbReference type="EMBL" id="K02378">
    <property type="protein sequence ID" value="AAA48441.1"/>
    <property type="molecule type" value="Genomic_RNA"/>
</dbReference>
<dbReference type="PDB" id="5CHS">
    <property type="method" value="X-ray"/>
    <property type="resolution" value="1.80 A"/>
    <property type="chains" value="A/B=36-380"/>
</dbReference>
<dbReference type="PDBsum" id="5CHS"/>
<dbReference type="SMR" id="Q98776"/>
<dbReference type="BRENDA" id="2.7.7.88">
    <property type="organism ID" value="14216"/>
</dbReference>
<dbReference type="EvolutionaryTrace" id="Q98776"/>
<dbReference type="GO" id="GO:0030430">
    <property type="term" value="C:host cell cytoplasm"/>
    <property type="evidence" value="ECO:0007669"/>
    <property type="project" value="UniProtKB-SubCell"/>
</dbReference>
<dbReference type="GO" id="GO:0044423">
    <property type="term" value="C:virion component"/>
    <property type="evidence" value="ECO:0007669"/>
    <property type="project" value="UniProtKB-KW"/>
</dbReference>
<dbReference type="GO" id="GO:0005524">
    <property type="term" value="F:ATP binding"/>
    <property type="evidence" value="ECO:0007669"/>
    <property type="project" value="UniProtKB-KW"/>
</dbReference>
<dbReference type="GO" id="GO:0003924">
    <property type="term" value="F:GTPase activity"/>
    <property type="evidence" value="ECO:0007669"/>
    <property type="project" value="RHEA"/>
</dbReference>
<dbReference type="GO" id="GO:0046872">
    <property type="term" value="F:metal ion binding"/>
    <property type="evidence" value="ECO:0007669"/>
    <property type="project" value="UniProtKB-KW"/>
</dbReference>
<dbReference type="GO" id="GO:0004482">
    <property type="term" value="F:mRNA 5'-cap (guanine-N7-)-methyltransferase activity"/>
    <property type="evidence" value="ECO:0007669"/>
    <property type="project" value="InterPro"/>
</dbReference>
<dbReference type="GO" id="GO:0003968">
    <property type="term" value="F:RNA-directed RNA polymerase activity"/>
    <property type="evidence" value="ECO:0007669"/>
    <property type="project" value="UniProtKB-KW"/>
</dbReference>
<dbReference type="GO" id="GO:0039689">
    <property type="term" value="P:negative stranded viral RNA replication"/>
    <property type="evidence" value="ECO:0000250"/>
    <property type="project" value="UniProtKB"/>
</dbReference>
<dbReference type="FunFam" id="3.40.50.150:FF:000473">
    <property type="entry name" value="RNA-directed RNA polymerase L"/>
    <property type="match status" value="1"/>
</dbReference>
<dbReference type="Gene3D" id="3.40.50.150">
    <property type="entry name" value="Vaccinia Virus protein VP39"/>
    <property type="match status" value="1"/>
</dbReference>
<dbReference type="InterPro" id="IPR039530">
    <property type="entry name" value="L_methyltransferase_rhabdo"/>
</dbReference>
<dbReference type="InterPro" id="IPR039736">
    <property type="entry name" value="L_poly_C"/>
</dbReference>
<dbReference type="InterPro" id="IPR048398">
    <property type="entry name" value="Methyltrans_Mon_C"/>
</dbReference>
<dbReference type="InterPro" id="IPR048397">
    <property type="entry name" value="Methyltrans_Mon_CD"/>
</dbReference>
<dbReference type="InterPro" id="IPR026890">
    <property type="entry name" value="Mononeg_mRNAcap"/>
</dbReference>
<dbReference type="InterPro" id="IPR014023">
    <property type="entry name" value="Mononeg_RNA_pol_cat"/>
</dbReference>
<dbReference type="InterPro" id="IPR025786">
    <property type="entry name" value="Mononega_L_MeTrfase"/>
</dbReference>
<dbReference type="InterPro" id="IPR017234">
    <property type="entry name" value="RNA-dir_pol_rhabdovirus"/>
</dbReference>
<dbReference type="InterPro" id="IPR029063">
    <property type="entry name" value="SAM-dependent_MTases_sf"/>
</dbReference>
<dbReference type="NCBIfam" id="TIGR04198">
    <property type="entry name" value="paramyx_RNAcap"/>
    <property type="match status" value="1"/>
</dbReference>
<dbReference type="Pfam" id="PF21080">
    <property type="entry name" value="Methyltrans_Mon_1st"/>
    <property type="match status" value="1"/>
</dbReference>
<dbReference type="Pfam" id="PF14314">
    <property type="entry name" value="Methyltrans_Mon_2nd"/>
    <property type="match status" value="1"/>
</dbReference>
<dbReference type="Pfam" id="PF21081">
    <property type="entry name" value="Methyltrans_Mon_3rd"/>
    <property type="match status" value="1"/>
</dbReference>
<dbReference type="Pfam" id="PF14318">
    <property type="entry name" value="Mononeg_mRNAcap"/>
    <property type="match status" value="1"/>
</dbReference>
<dbReference type="Pfam" id="PF00946">
    <property type="entry name" value="Mononeg_RNA_pol"/>
    <property type="match status" value="1"/>
</dbReference>
<dbReference type="PIRSF" id="PIRSF037546">
    <property type="entry name" value="RNA_pol_RhabdoV_sub"/>
    <property type="match status" value="1"/>
</dbReference>
<dbReference type="PROSITE" id="PS50526">
    <property type="entry name" value="RDRP_SSRNA_NEG_NONSEG"/>
    <property type="match status" value="1"/>
</dbReference>
<dbReference type="PROSITE" id="PS51590">
    <property type="entry name" value="SAM_MT_MNV_L"/>
    <property type="match status" value="1"/>
</dbReference>
<name>L_VSIVM</name>
<protein>
    <recommendedName>
        <fullName>RNA-directed RNA polymerase L</fullName>
        <shortName>Protein L</shortName>
    </recommendedName>
    <alternativeName>
        <fullName>Large structural protein</fullName>
    </alternativeName>
    <alternativeName>
        <fullName>Replicase</fullName>
    </alternativeName>
    <alternativeName>
        <fullName>Transcriptase</fullName>
    </alternativeName>
    <domain>
        <recommendedName>
            <fullName>RNA-directed RNA polymerase</fullName>
            <ecNumber evidence="2">2.7.7.48</ecNumber>
        </recommendedName>
    </domain>
    <domain>
        <recommendedName>
            <fullName evidence="7">GTP phosphohydrolase</fullName>
            <ecNumber evidence="1">3.6.1.-</ecNumber>
        </recommendedName>
    </domain>
    <domain>
        <recommendedName>
            <fullName evidence="7">GDP polyribonucleotidyltransferase</fullName>
            <ecNumber evidence="6">2.7.7.88</ecNumber>
        </recommendedName>
        <alternativeName>
            <fullName evidence="7">PRNTase</fullName>
        </alternativeName>
    </domain>
    <domain>
        <recommendedName>
            <fullName evidence="7">mRNA cap methyltransferase</fullName>
            <ecNumber evidence="1">2.1.1.375</ecNumber>
        </recommendedName>
        <alternativeName>
            <fullName evidence="1">mRNA (guanine-N(7)-)-methyltransferase</fullName>
            <shortName evidence="1">G-N7-MTase</shortName>
        </alternativeName>
        <alternativeName>
            <fullName evidence="1">mRNA (nucleoside-2'-O-)-methyltransferase</fullName>
            <shortName evidence="1">N1-2'-O-MTase</shortName>
        </alternativeName>
    </domain>
</protein>
<reference key="1">
    <citation type="journal article" date="1984" name="J. Virol.">
        <title>Primary structure of the vesicular stomatitis virus polymerase (L) gene: evidence for a high frequency of mutations.</title>
        <authorList>
            <person name="Schubert M."/>
            <person name="Harmison G.G."/>
            <person name="Meier E."/>
        </authorList>
    </citation>
    <scope>NUCLEOTIDE SEQUENCE [GENOMIC RNA]</scope>
</reference>
<reference key="2">
    <citation type="journal article" date="1988" name="Virology">
        <title>The functional domains of the phosphoprotein (NS) of vesicular stomatitis virus (Indiana serotype).</title>
        <authorList>
            <person name="Paul P.R."/>
            <person name="Chattopadhyay D."/>
            <person name="Banerjee A.K."/>
        </authorList>
    </citation>
    <scope>INTERACTION WITH PHOSPHOPROTEIN</scope>
</reference>
<reference evidence="8" key="3">
    <citation type="journal article" date="2016" name="J. Virol.">
        <title>Structure and Function of the N-Terminal Domain of the Vesicular Stomatitis Virus RNA Polymerase.</title>
        <authorList>
            <person name="Qiu S."/>
            <person name="Ogino M."/>
            <person name="Luo M."/>
            <person name="Ogino T."/>
            <person name="Green T.J."/>
        </authorList>
    </citation>
    <scope>X-RAY CRYSTALLOGRAPHY (1.80 ANGSTROMS) OF 36-380</scope>
    <scope>MUTAGENESIS OF TYR-39; LEU-41; ASP-236; GLU-290; ARG-356; HIS-357 AND TRP-358</scope>
    <scope>CATALYTIC ACTIVITY</scope>
</reference>
<organism>
    <name type="scientific">Vesicular stomatitis Indiana virus (strain Mudd-Summers)</name>
    <name type="common">VSIV</name>
    <dbReference type="NCBI Taxonomy" id="11279"/>
    <lineage>
        <taxon>Viruses</taxon>
        <taxon>Riboviria</taxon>
        <taxon>Orthornavirae</taxon>
        <taxon>Negarnaviricota</taxon>
        <taxon>Haploviricotina</taxon>
        <taxon>Monjiviricetes</taxon>
        <taxon>Mononegavirales</taxon>
        <taxon>Rhabdoviridae</taxon>
        <taxon>Alpharhabdovirinae</taxon>
        <taxon>Vesiculovirus</taxon>
        <taxon>Vesiculovirus indiana</taxon>
    </lineage>
</organism>
<sequence length="2109" mass="240998">MEVHDFETDEFNDFNEDDYATREFLNPDERMTYLNHADYNLNSPLISDDIDNLIRKFNSLPIPSMWDSKNWDGVLEMLTSCQANPISTSQMHKWMGSWLMSDNHDASQGYSFLHEVDKEAEITFDVVETFIRGWGNKPIEYIKKERWTDSFKILAYLCQKFLDLHKLTLILNAVSEVELLNLARTFKGKVRRSSHGTNICRIRVPSLGPTFISEGWAYFKKLDILMDRNFLLMVKDVIIGRMQTVLSMVCRIDNLFSEQDIFSLLNIYRIGDKIVERQGNFSYDLIKMVEPICNLKLMKLARESRPLVPQFPHFENHIKTSVDEGAKIDRGIRFLHDQIMSVKTVDLTLVIYGSFRHWGHPFIDYYTGLEKLHSQVTMKKDIDVSYAKALASDLARIVLFQQFNDHKKWFVNGDLLPHDHPFKSHVKENTWPTAAQVQDFGDKWHELPLIKCFEIPDLLDPSIIYSDKSHSMNRSEVLKHVRMNPNTPIPSKKVLQTMLDTKATNWKEFLKEIDEKGLDDDDLIIGLKGKERELKLAGRFFSLMSWKLREYFVITEYLIKTHFVPMFKGLTMADDLTAVIKKMLDSSSGQGLKSYEAICIANHIDYEKWNNHQRKLSNGPVFRVMGQFLGYPSLIERTHEFFEKSLIYYNGRPDLMRVHNNTLINSTSQRVCWQGQEGGLEGLRQKGWTILNLLVIQREAKIRNTAVKVLAQGDNQVICTQYKTKKSRNVVELQGALNQMVSNNEKIMTAIKIGTGKLGLLINDDETMQSADYLNYGKIPIFRGVIRGLETKRWSRVTCVTNDQIPTCANIMSSVSTNALTVAHFAENPINAMIQYNYFGTFARLLLMMHDPALRQSLYEVQDKIPGLHSSTFKYAMLYLDPSIGGVSGMSLSRFLIRAFPDPVTESLSFWRFIHVHARSEHLKEMSAVFGNPEIAKFRITHIDKLVEDPTSLNIAMGMSPANLLKTEVKKCLIESRQTIRNQVIKDATIYLYHEEDRLRSFLWSINPLFPRFLSEFKSGTFLGVADGLISLFQNSRTIRNSFKKKYHRELDDLIVRSEVSSLTHLGKLHLRRGSCKMWTCSATHADTLRYKSWGRTVIGTTVPHPLEMLGPQHRKETPCAPCNTSGFNYVSVHCPDGIHDVFSSRGPLPAYLGSKTSESTSILQPWERESKVPLIKRATRLRDAISWFVEPDSKLAMTILSNIHSLTGEEWTKRQHGFKRTGSALHRFSTSRMSHGGFASQSTAALTRLMATTDTMRDLGDQNFDFLFQATLLYAQITTTVARDGWITSCTDHYHIACKSCLRPIEEITLDSSMDYTPPDVSHVLKTWRNGEGSWGQEIKQIYPLEGNWKNLAPAEQSYQVGRCIGFLYGDLAYRKSTHAEDSSLFPLSIQGRIRGRGFLKGLLDGLMRASCCQVIHRRSLAHLKRPANAVYGGLIYLIDKLSVSPPFLSLTRSGPIRDELETIPHKIPTSYPTSNRDMGVIVRNYFKYQCRLIEKGKYRSHYSQLWLFSDVLSIDFIGPFSISTTLLQILYKPFLSGKDKNELRELANLSSLLRSGEGWEDIHVKFFTKDILLCPEEIRHACKFGIAKDNNKDMSYPPWGRESRGTITTIPVYYTTTPYPKMLEMPPRIQNPLLSGIRLGQLPTGAHYKIRSILHGMGIHYRDFLSCGDGSGGMTAALLRENVHSRGIFNSLLELSGSVMRGASPEPPSALETLGGDKSRCVNGETCWEYPSDLCDPRTWDYFLRLKAGLGLQIDLIVMDMEVRDSSTSLKIETNVRNYVHRILDEQGVLIYKTYGTYICESEKNAVTILGPMFKTVDLVQTEFSSSQTSEVYMVCKGLKKLIDEPNPDWSSINESWKNLYAFQSSEQEFARAKKVSTYFTLTGIPSQFIPDPFVNIETMLQIFGVPTGVSHAAALKSSDRPADLLTISLFYMAIISYYNINHIRVGPIPPNPPSDGIAQNVGIAITGISFWLSLMEKDIPLYQQCLAVIQQSFPIRWEAVSVKGGYKQKWSTRGDGLPKDTRISDSLAPIGNWIRSLELVRNQVRLNPFNEILFNQLCRTVDNHLKWSNLRRNTGMIEWINRRISKEDRSILMLKSDLHEENSWRD</sequence>
<evidence type="ECO:0000250" key="1">
    <source>
        <dbReference type="UniProtKB" id="P03523"/>
    </source>
</evidence>
<evidence type="ECO:0000250" key="2">
    <source>
        <dbReference type="UniProtKB" id="P28887"/>
    </source>
</evidence>
<evidence type="ECO:0000255" key="3"/>
<evidence type="ECO:0000255" key="4">
    <source>
        <dbReference type="PROSITE-ProRule" id="PRU00539"/>
    </source>
</evidence>
<evidence type="ECO:0000255" key="5">
    <source>
        <dbReference type="PROSITE-ProRule" id="PRU00923"/>
    </source>
</evidence>
<evidence type="ECO:0000269" key="6">
    <source>
    </source>
</evidence>
<evidence type="ECO:0000305" key="7"/>
<evidence type="ECO:0007744" key="8">
    <source>
        <dbReference type="PDB" id="5CHS"/>
    </source>
</evidence>
<evidence type="ECO:0007829" key="9">
    <source>
        <dbReference type="PDB" id="5CHS"/>
    </source>
</evidence>
<accession>Q98776</accession>
<gene>
    <name type="primary">L</name>
</gene>